<organism>
    <name type="scientific">Prochlorococcus marinus (strain MIT 9215)</name>
    <dbReference type="NCBI Taxonomy" id="93060"/>
    <lineage>
        <taxon>Bacteria</taxon>
        <taxon>Bacillati</taxon>
        <taxon>Cyanobacteriota</taxon>
        <taxon>Cyanophyceae</taxon>
        <taxon>Synechococcales</taxon>
        <taxon>Prochlorococcaceae</taxon>
        <taxon>Prochlorococcus</taxon>
    </lineage>
</organism>
<accession>A8G3E4</accession>
<sequence>MVALRLIPCLDVANGRVVKGVNFVNLRDSGDPVELACRYSDEGADELVFLDIRASVENRNTLVNLVSRTAKSVKIPFTVGGGIDSVSSINDLLRAGADKVSLNSSAVINPDLISESSREFGNQCIVIAIDARRKVDKVGEWEVYVKGGRENTGIDVLSWAKKVEELGAGEILLTSMDGDGTQNGYDLHLTESVANIVDIPVIASGGAGSLEDIYDVFKEGRASAALLASLLHDKKLTLKEIKTFLLEKKLPIRPYE</sequence>
<feature type="chain" id="PRO_1000063113" description="Imidazole glycerol phosphate synthase subunit HisF">
    <location>
        <begin position="1"/>
        <end position="256"/>
    </location>
</feature>
<feature type="active site" evidence="1">
    <location>
        <position position="11"/>
    </location>
</feature>
<feature type="active site" evidence="1">
    <location>
        <position position="130"/>
    </location>
</feature>
<gene>
    <name evidence="1" type="primary">hisF</name>
    <name type="ordered locus">P9215_05091</name>
</gene>
<keyword id="KW-0028">Amino-acid biosynthesis</keyword>
<keyword id="KW-0963">Cytoplasm</keyword>
<keyword id="KW-0368">Histidine biosynthesis</keyword>
<keyword id="KW-0456">Lyase</keyword>
<comment type="function">
    <text evidence="1">IGPS catalyzes the conversion of PRFAR and glutamine to IGP, AICAR and glutamate. The HisF subunit catalyzes the cyclization activity that produces IGP and AICAR from PRFAR using the ammonia provided by the HisH subunit.</text>
</comment>
<comment type="catalytic activity">
    <reaction evidence="1">
        <text>5-[(5-phospho-1-deoxy-D-ribulos-1-ylimino)methylamino]-1-(5-phospho-beta-D-ribosyl)imidazole-4-carboxamide + L-glutamine = D-erythro-1-(imidazol-4-yl)glycerol 3-phosphate + 5-amino-1-(5-phospho-beta-D-ribosyl)imidazole-4-carboxamide + L-glutamate + H(+)</text>
        <dbReference type="Rhea" id="RHEA:24793"/>
        <dbReference type="ChEBI" id="CHEBI:15378"/>
        <dbReference type="ChEBI" id="CHEBI:29985"/>
        <dbReference type="ChEBI" id="CHEBI:58278"/>
        <dbReference type="ChEBI" id="CHEBI:58359"/>
        <dbReference type="ChEBI" id="CHEBI:58475"/>
        <dbReference type="ChEBI" id="CHEBI:58525"/>
        <dbReference type="EC" id="4.3.2.10"/>
    </reaction>
</comment>
<comment type="pathway">
    <text evidence="1">Amino-acid biosynthesis; L-histidine biosynthesis; L-histidine from 5-phospho-alpha-D-ribose 1-diphosphate: step 5/9.</text>
</comment>
<comment type="subunit">
    <text evidence="1">Heterodimer of HisH and HisF.</text>
</comment>
<comment type="subcellular location">
    <subcellularLocation>
        <location evidence="1">Cytoplasm</location>
    </subcellularLocation>
</comment>
<comment type="similarity">
    <text evidence="1">Belongs to the HisA/HisF family.</text>
</comment>
<name>HIS6_PROM2</name>
<reference key="1">
    <citation type="journal article" date="2007" name="PLoS Genet.">
        <title>Patterns and implications of gene gain and loss in the evolution of Prochlorococcus.</title>
        <authorList>
            <person name="Kettler G.C."/>
            <person name="Martiny A.C."/>
            <person name="Huang K."/>
            <person name="Zucker J."/>
            <person name="Coleman M.L."/>
            <person name="Rodrigue S."/>
            <person name="Chen F."/>
            <person name="Lapidus A."/>
            <person name="Ferriera S."/>
            <person name="Johnson J."/>
            <person name="Steglich C."/>
            <person name="Church G.M."/>
            <person name="Richardson P."/>
            <person name="Chisholm S.W."/>
        </authorList>
    </citation>
    <scope>NUCLEOTIDE SEQUENCE [LARGE SCALE GENOMIC DNA]</scope>
    <source>
        <strain>MIT 9215</strain>
    </source>
</reference>
<evidence type="ECO:0000255" key="1">
    <source>
        <dbReference type="HAMAP-Rule" id="MF_01013"/>
    </source>
</evidence>
<proteinExistence type="inferred from homology"/>
<dbReference type="EC" id="4.3.2.10" evidence="1"/>
<dbReference type="EMBL" id="CP000825">
    <property type="protein sequence ID" value="ABV50125.1"/>
    <property type="molecule type" value="Genomic_DNA"/>
</dbReference>
<dbReference type="RefSeq" id="WP_012007258.1">
    <property type="nucleotide sequence ID" value="NC_009840.1"/>
</dbReference>
<dbReference type="SMR" id="A8G3E4"/>
<dbReference type="STRING" id="93060.P9215_05091"/>
<dbReference type="KEGG" id="pmh:P9215_05091"/>
<dbReference type="eggNOG" id="COG0107">
    <property type="taxonomic scope" value="Bacteria"/>
</dbReference>
<dbReference type="HOGENOM" id="CLU_048577_4_0_3"/>
<dbReference type="OrthoDB" id="9781903at2"/>
<dbReference type="UniPathway" id="UPA00031">
    <property type="reaction ID" value="UER00010"/>
</dbReference>
<dbReference type="Proteomes" id="UP000002014">
    <property type="component" value="Chromosome"/>
</dbReference>
<dbReference type="GO" id="GO:0005737">
    <property type="term" value="C:cytoplasm"/>
    <property type="evidence" value="ECO:0007669"/>
    <property type="project" value="UniProtKB-SubCell"/>
</dbReference>
<dbReference type="GO" id="GO:0000107">
    <property type="term" value="F:imidazoleglycerol-phosphate synthase activity"/>
    <property type="evidence" value="ECO:0007669"/>
    <property type="project" value="UniProtKB-UniRule"/>
</dbReference>
<dbReference type="GO" id="GO:0016829">
    <property type="term" value="F:lyase activity"/>
    <property type="evidence" value="ECO:0007669"/>
    <property type="project" value="UniProtKB-KW"/>
</dbReference>
<dbReference type="GO" id="GO:0000105">
    <property type="term" value="P:L-histidine biosynthetic process"/>
    <property type="evidence" value="ECO:0007669"/>
    <property type="project" value="UniProtKB-UniRule"/>
</dbReference>
<dbReference type="CDD" id="cd04731">
    <property type="entry name" value="HisF"/>
    <property type="match status" value="1"/>
</dbReference>
<dbReference type="FunFam" id="3.20.20.70:FF:000006">
    <property type="entry name" value="Imidazole glycerol phosphate synthase subunit HisF"/>
    <property type="match status" value="1"/>
</dbReference>
<dbReference type="Gene3D" id="3.20.20.70">
    <property type="entry name" value="Aldolase class I"/>
    <property type="match status" value="1"/>
</dbReference>
<dbReference type="HAMAP" id="MF_01013">
    <property type="entry name" value="HisF"/>
    <property type="match status" value="1"/>
</dbReference>
<dbReference type="InterPro" id="IPR013785">
    <property type="entry name" value="Aldolase_TIM"/>
</dbReference>
<dbReference type="InterPro" id="IPR006062">
    <property type="entry name" value="His_biosynth"/>
</dbReference>
<dbReference type="InterPro" id="IPR004651">
    <property type="entry name" value="HisF"/>
</dbReference>
<dbReference type="InterPro" id="IPR050064">
    <property type="entry name" value="IGPS_HisA/HisF"/>
</dbReference>
<dbReference type="InterPro" id="IPR011060">
    <property type="entry name" value="RibuloseP-bd_barrel"/>
</dbReference>
<dbReference type="NCBIfam" id="TIGR00735">
    <property type="entry name" value="hisF"/>
    <property type="match status" value="1"/>
</dbReference>
<dbReference type="PANTHER" id="PTHR21235:SF2">
    <property type="entry name" value="IMIDAZOLE GLYCEROL PHOSPHATE SYNTHASE HISHF"/>
    <property type="match status" value="1"/>
</dbReference>
<dbReference type="PANTHER" id="PTHR21235">
    <property type="entry name" value="IMIDAZOLE GLYCEROL PHOSPHATE SYNTHASE SUBUNIT HISF/H IGP SYNTHASE SUBUNIT HISF/H"/>
    <property type="match status" value="1"/>
</dbReference>
<dbReference type="Pfam" id="PF00977">
    <property type="entry name" value="His_biosynth"/>
    <property type="match status" value="1"/>
</dbReference>
<dbReference type="SUPFAM" id="SSF51366">
    <property type="entry name" value="Ribulose-phoshate binding barrel"/>
    <property type="match status" value="1"/>
</dbReference>
<protein>
    <recommendedName>
        <fullName evidence="1">Imidazole glycerol phosphate synthase subunit HisF</fullName>
        <ecNumber evidence="1">4.3.2.10</ecNumber>
    </recommendedName>
    <alternativeName>
        <fullName evidence="1">IGP synthase cyclase subunit</fullName>
    </alternativeName>
    <alternativeName>
        <fullName evidence="1">IGP synthase subunit HisF</fullName>
    </alternativeName>
    <alternativeName>
        <fullName evidence="1">ImGP synthase subunit HisF</fullName>
        <shortName evidence="1">IGPS subunit HisF</shortName>
    </alternativeName>
</protein>